<gene>
    <name type="primary">ACA7</name>
    <name type="ordered locus">At2g22950</name>
    <name type="ORF">T20K9.16</name>
</gene>
<reference key="1">
    <citation type="journal article" date="1999" name="Nature">
        <title>Sequence and analysis of chromosome 2 of the plant Arabidopsis thaliana.</title>
        <authorList>
            <person name="Lin X."/>
            <person name="Kaul S."/>
            <person name="Rounsley S.D."/>
            <person name="Shea T.P."/>
            <person name="Benito M.-I."/>
            <person name="Town C.D."/>
            <person name="Fujii C.Y."/>
            <person name="Mason T.M."/>
            <person name="Bowman C.L."/>
            <person name="Barnstead M.E."/>
            <person name="Feldblyum T.V."/>
            <person name="Buell C.R."/>
            <person name="Ketchum K.A."/>
            <person name="Lee J.J."/>
            <person name="Ronning C.M."/>
            <person name="Koo H.L."/>
            <person name="Moffat K.S."/>
            <person name="Cronin L.A."/>
            <person name="Shen M."/>
            <person name="Pai G."/>
            <person name="Van Aken S."/>
            <person name="Umayam L."/>
            <person name="Tallon L.J."/>
            <person name="Gill J.E."/>
            <person name="Adams M.D."/>
            <person name="Carrera A.J."/>
            <person name="Creasy T.H."/>
            <person name="Goodman H.M."/>
            <person name="Somerville C.R."/>
            <person name="Copenhaver G.P."/>
            <person name="Preuss D."/>
            <person name="Nierman W.C."/>
            <person name="White O."/>
            <person name="Eisen J.A."/>
            <person name="Salzberg S.L."/>
            <person name="Fraser C.M."/>
            <person name="Venter J.C."/>
        </authorList>
    </citation>
    <scope>NUCLEOTIDE SEQUENCE [LARGE SCALE GENOMIC DNA]</scope>
    <source>
        <strain>cv. Columbia</strain>
    </source>
</reference>
<reference key="2">
    <citation type="journal article" date="2017" name="Plant J.">
        <title>Araport11: a complete reannotation of the Arabidopsis thaliana reference genome.</title>
        <authorList>
            <person name="Cheng C.Y."/>
            <person name="Krishnakumar V."/>
            <person name="Chan A.P."/>
            <person name="Thibaud-Nissen F."/>
            <person name="Schobel S."/>
            <person name="Town C.D."/>
        </authorList>
    </citation>
    <scope>GENOME REANNOTATION</scope>
    <source>
        <strain>cv. Columbia</strain>
    </source>
</reference>
<evidence type="ECO:0000250" key="1"/>
<evidence type="ECO:0000250" key="2">
    <source>
        <dbReference type="UniProtKB" id="O81108"/>
    </source>
</evidence>
<evidence type="ECO:0000255" key="3"/>
<evidence type="ECO:0000305" key="4"/>
<feature type="chain" id="PRO_0000046413" description="Putative calcium-transporting ATPase 7, plasma membrane-type">
    <location>
        <begin position="1"/>
        <end position="1015"/>
    </location>
</feature>
<feature type="topological domain" description="Cytoplasmic" evidence="3">
    <location>
        <begin position="1"/>
        <end position="161"/>
    </location>
</feature>
<feature type="transmembrane region" description="Helical" evidence="3">
    <location>
        <begin position="162"/>
        <end position="182"/>
    </location>
</feature>
<feature type="topological domain" description="Lumenal" evidence="3">
    <location>
        <begin position="183"/>
        <end position="200"/>
    </location>
</feature>
<feature type="transmembrane region" description="Helical" evidence="3">
    <location>
        <begin position="201"/>
        <end position="221"/>
    </location>
</feature>
<feature type="topological domain" description="Cytoplasmic" evidence="3">
    <location>
        <begin position="222"/>
        <end position="349"/>
    </location>
</feature>
<feature type="transmembrane region" description="Helical" evidence="3">
    <location>
        <begin position="350"/>
        <end position="369"/>
    </location>
</feature>
<feature type="topological domain" description="Lumenal" evidence="3">
    <location>
        <begin position="370"/>
        <end position="399"/>
    </location>
</feature>
<feature type="transmembrane region" description="Helical" evidence="3">
    <location>
        <begin position="400"/>
        <end position="417"/>
    </location>
</feature>
<feature type="topological domain" description="Cytoplasmic" evidence="3">
    <location>
        <begin position="418"/>
        <end position="811"/>
    </location>
</feature>
<feature type="transmembrane region" description="Helical" evidence="3">
    <location>
        <begin position="812"/>
        <end position="830"/>
    </location>
</feature>
<feature type="topological domain" description="Lumenal" evidence="3">
    <location>
        <begin position="831"/>
        <end position="841"/>
    </location>
</feature>
<feature type="transmembrane region" description="Helical" evidence="3">
    <location>
        <begin position="842"/>
        <end position="862"/>
    </location>
</feature>
<feature type="topological domain" description="Cytoplasmic" evidence="3">
    <location>
        <begin position="863"/>
        <end position="882"/>
    </location>
</feature>
<feature type="transmembrane region" description="Helical" evidence="3">
    <location>
        <begin position="883"/>
        <end position="905"/>
    </location>
</feature>
<feature type="topological domain" description="Lumenal" evidence="3">
    <location>
        <begin position="906"/>
        <end position="917"/>
    </location>
</feature>
<feature type="transmembrane region" description="Helical" evidence="3">
    <location>
        <begin position="918"/>
        <end position="939"/>
    </location>
</feature>
<feature type="topological domain" description="Cytoplasmic" evidence="3">
    <location>
        <begin position="940"/>
        <end position="957"/>
    </location>
</feature>
<feature type="transmembrane region" description="Helical" evidence="3">
    <location>
        <begin position="958"/>
        <end position="979"/>
    </location>
</feature>
<feature type="topological domain" description="Lumenal" evidence="3">
    <location>
        <begin position="980"/>
        <end position="989"/>
    </location>
</feature>
<feature type="transmembrane region" description="Helical" evidence="3">
    <location>
        <begin position="990"/>
        <end position="1011"/>
    </location>
</feature>
<feature type="topological domain" description="Cytoplasmic" evidence="3">
    <location>
        <begin position="1012"/>
        <end position="1015"/>
    </location>
</feature>
<feature type="region of interest" description="Interaction with calmodulin" evidence="1">
    <location>
        <begin position="20"/>
        <end position="31"/>
    </location>
</feature>
<feature type="active site" description="4-aspartylphosphate intermediate" evidence="1">
    <location>
        <position position="455"/>
    </location>
</feature>
<feature type="binding site" evidence="1">
    <location>
        <position position="756"/>
    </location>
    <ligand>
        <name>Mg(2+)</name>
        <dbReference type="ChEBI" id="CHEBI:18420"/>
    </ligand>
</feature>
<feature type="binding site" evidence="1">
    <location>
        <position position="760"/>
    </location>
    <ligand>
        <name>Mg(2+)</name>
        <dbReference type="ChEBI" id="CHEBI:18420"/>
    </ligand>
</feature>
<feature type="modified residue" description="N-acetylmethionine" evidence="2">
    <location>
        <position position="1"/>
    </location>
</feature>
<feature type="modified residue" description="Phosphoserine; by CPK" evidence="2">
    <location>
        <position position="45"/>
    </location>
</feature>
<keyword id="KW-0007">Acetylation</keyword>
<keyword id="KW-0067">ATP-binding</keyword>
<keyword id="KW-0106">Calcium</keyword>
<keyword id="KW-0109">Calcium transport</keyword>
<keyword id="KW-0112">Calmodulin-binding</keyword>
<keyword id="KW-0406">Ion transport</keyword>
<keyword id="KW-0460">Magnesium</keyword>
<keyword id="KW-0472">Membrane</keyword>
<keyword id="KW-0479">Metal-binding</keyword>
<keyword id="KW-0547">Nucleotide-binding</keyword>
<keyword id="KW-0597">Phosphoprotein</keyword>
<keyword id="KW-1185">Reference proteome</keyword>
<keyword id="KW-1278">Translocase</keyword>
<keyword id="KW-0812">Transmembrane</keyword>
<keyword id="KW-1133">Transmembrane helix</keyword>
<keyword id="KW-0813">Transport</keyword>
<proteinExistence type="inferred from homology"/>
<comment type="function">
    <text evidence="1">This magnesium-dependent enzyme catalyzes the hydrolysis of ATP coupled with the translocation of calcium from the cytosol out of the cell or into organelles.</text>
</comment>
<comment type="catalytic activity">
    <reaction>
        <text>Ca(2+)(in) + ATP + H2O = Ca(2+)(out) + ADP + phosphate + H(+)</text>
        <dbReference type="Rhea" id="RHEA:18105"/>
        <dbReference type="ChEBI" id="CHEBI:15377"/>
        <dbReference type="ChEBI" id="CHEBI:15378"/>
        <dbReference type="ChEBI" id="CHEBI:29108"/>
        <dbReference type="ChEBI" id="CHEBI:30616"/>
        <dbReference type="ChEBI" id="CHEBI:43474"/>
        <dbReference type="ChEBI" id="CHEBI:456216"/>
        <dbReference type="EC" id="7.2.2.10"/>
    </reaction>
</comment>
<comment type="activity regulation">
    <text evidence="1">Activated by calmodulin.</text>
</comment>
<comment type="subcellular location">
    <subcellularLocation>
        <location>Membrane</location>
        <topology>Multi-pass membrane protein</topology>
    </subcellularLocation>
</comment>
<comment type="domain">
    <text evidence="1">The N-terminus contains an autoinhibitory calmodulin-binding domain, which binds calmodulin in a calcium-dependent fashion.</text>
</comment>
<comment type="similarity">
    <text evidence="4">Belongs to the cation transport ATPase (P-type) (TC 3.A.3) family. Type IIB subfamily.</text>
</comment>
<name>ACA7_ARATH</name>
<sequence length="1015" mass="110773">MESYLNSNFDVKAKHSSEEVLEKWRNLCSVVKNPKRRFRFTANLSKRYEAAAMRRTNQEKLRIAVLVSKAAFQFISGVSPSDYKVPEEVKAAGFDICADELGSIVEGHDVKKLKFHGGVDGLSGKLKACPNAGLSTGEPEQLSKRQELFGINKFAESELRSFWVFVWEALQDMTLMILGVCAFVSLIVGIATEGWPQGSHDGLGIVASILLVVFVTATSDYRQSLQFRDLDKEKKKITVQVTRNGFRQKMSIYDLLPGDVVHLAIGDQVPADGLFLSGFSVVIDESSLTGESEPVMVTAQNPFLLSGTKVQDGSCKMLVTTVGMRTQWGKLMATLSEGGDDETPLQVKLNGVATIIGKIGLSFAIVTFAVLVQGMFMRKLSLGPHWWWSGDDALELLEYFAIAVTIVVVAVPEGLPLAVTLSLAFAMKKMMNDKALVRHLAACETMGSATTICSDKTGTLTTNHMTVVKSCICMNVQDVASKSSSLQSDIPEAALKLLLQLIFNNTGGEVVVNERGKTEILGTPTETAILELGLSLGGKFQEERQSNKVIKVEPFNSTKKRMGVVIELPEGGRIRAHTKGASEIVLAACDKVINSSGEVVPLDDESIKFLNVTIDEFANEALRTLCLAYMDIESGFSADEGIPEKGFTCIGIVGIKDPVRPGVRESVELCRRAGIMVRMVTGDNINTAKAIARECGILTDDGIAIEGPVFREKNQEEMLELIPKIQVMARSSPMDKHTLVKQLRTTFDEVVAVTGDGTNDAPALHEADIGLAMGIAGTEVAKEIADVIILDDNFSTIVTVAKWGRSVYINIQKFVQFQLTVNVVALIVNFSSACLTGSAPLTAVQLLWVNMIMDTLGALALATEPPNNELMKRMPVGRRGNFITNAMWRNILGQAVYQFIIIWILQAKGKSMFGLVGSDSTLVLNTLIFNCFVFCQVFNEVSSREMEEIDVFKGILDNYVFVVVIGATVFFQIIIIEFLGTFASTTPLTIVQWFFSIFVGFLGMPIAAGLKKIPV</sequence>
<organism>
    <name type="scientific">Arabidopsis thaliana</name>
    <name type="common">Mouse-ear cress</name>
    <dbReference type="NCBI Taxonomy" id="3702"/>
    <lineage>
        <taxon>Eukaryota</taxon>
        <taxon>Viridiplantae</taxon>
        <taxon>Streptophyta</taxon>
        <taxon>Embryophyta</taxon>
        <taxon>Tracheophyta</taxon>
        <taxon>Spermatophyta</taxon>
        <taxon>Magnoliopsida</taxon>
        <taxon>eudicotyledons</taxon>
        <taxon>Gunneridae</taxon>
        <taxon>Pentapetalae</taxon>
        <taxon>rosids</taxon>
        <taxon>malvids</taxon>
        <taxon>Brassicales</taxon>
        <taxon>Brassicaceae</taxon>
        <taxon>Camelineae</taxon>
        <taxon>Arabidopsis</taxon>
    </lineage>
</organism>
<protein>
    <recommendedName>
        <fullName>Putative calcium-transporting ATPase 7, plasma membrane-type</fullName>
        <ecNumber>7.2.2.10</ecNumber>
    </recommendedName>
    <alternativeName>
        <fullName>Ca(2+)-ATPase isoform 7</fullName>
    </alternativeName>
</protein>
<dbReference type="EC" id="7.2.2.10"/>
<dbReference type="EMBL" id="AC004401">
    <property type="protein sequence ID" value="AAF18608.2"/>
    <property type="molecule type" value="Genomic_DNA"/>
</dbReference>
<dbReference type="EMBL" id="AC004786">
    <property type="protein sequence ID" value="AAM15005.1"/>
    <property type="molecule type" value="Genomic_DNA"/>
</dbReference>
<dbReference type="EMBL" id="CP002685">
    <property type="protein sequence ID" value="AEC07380.1"/>
    <property type="molecule type" value="Genomic_DNA"/>
</dbReference>
<dbReference type="PIR" id="H84618">
    <property type="entry name" value="H84618"/>
</dbReference>
<dbReference type="RefSeq" id="NP_179879.1">
    <property type="nucleotide sequence ID" value="NM_127860.2"/>
</dbReference>
<dbReference type="SMR" id="O64806"/>
<dbReference type="BioGRID" id="2179">
    <property type="interactions" value="1"/>
</dbReference>
<dbReference type="FunCoup" id="O64806">
    <property type="interactions" value="2018"/>
</dbReference>
<dbReference type="STRING" id="3702.O64806"/>
<dbReference type="iPTMnet" id="O64806"/>
<dbReference type="PaxDb" id="3702-AT2G22950.1"/>
<dbReference type="ProteomicsDB" id="244379"/>
<dbReference type="EnsemblPlants" id="AT2G22950.1">
    <property type="protein sequence ID" value="AT2G22950.1"/>
    <property type="gene ID" value="AT2G22950"/>
</dbReference>
<dbReference type="GeneID" id="816826"/>
<dbReference type="Gramene" id="AT2G22950.1">
    <property type="protein sequence ID" value="AT2G22950.1"/>
    <property type="gene ID" value="AT2G22950"/>
</dbReference>
<dbReference type="KEGG" id="ath:AT2G22950"/>
<dbReference type="Araport" id="AT2G22950"/>
<dbReference type="TAIR" id="AT2G22950">
    <property type="gene designation" value="ACA7"/>
</dbReference>
<dbReference type="eggNOG" id="KOG0204">
    <property type="taxonomic scope" value="Eukaryota"/>
</dbReference>
<dbReference type="HOGENOM" id="CLU_002360_9_2_1"/>
<dbReference type="InParanoid" id="O64806"/>
<dbReference type="OMA" id="MINVHDI"/>
<dbReference type="PhylomeDB" id="O64806"/>
<dbReference type="BioCyc" id="ARA:AT2G22950-MONOMER"/>
<dbReference type="PRO" id="PR:O64806"/>
<dbReference type="Proteomes" id="UP000006548">
    <property type="component" value="Chromosome 2"/>
</dbReference>
<dbReference type="ExpressionAtlas" id="O64806">
    <property type="expression patterns" value="baseline and differential"/>
</dbReference>
<dbReference type="GO" id="GO:0005886">
    <property type="term" value="C:plasma membrane"/>
    <property type="evidence" value="ECO:0000314"/>
    <property type="project" value="TAIR"/>
</dbReference>
<dbReference type="GO" id="GO:0005524">
    <property type="term" value="F:ATP binding"/>
    <property type="evidence" value="ECO:0007669"/>
    <property type="project" value="UniProtKB-KW"/>
</dbReference>
<dbReference type="GO" id="GO:0016887">
    <property type="term" value="F:ATP hydrolysis activity"/>
    <property type="evidence" value="ECO:0007669"/>
    <property type="project" value="InterPro"/>
</dbReference>
<dbReference type="GO" id="GO:0005516">
    <property type="term" value="F:calmodulin binding"/>
    <property type="evidence" value="ECO:0007669"/>
    <property type="project" value="UniProtKB-KW"/>
</dbReference>
<dbReference type="GO" id="GO:0046872">
    <property type="term" value="F:metal ion binding"/>
    <property type="evidence" value="ECO:0007669"/>
    <property type="project" value="UniProtKB-KW"/>
</dbReference>
<dbReference type="GO" id="GO:0005388">
    <property type="term" value="F:P-type calcium transporter activity"/>
    <property type="evidence" value="ECO:0000250"/>
    <property type="project" value="TAIR"/>
</dbReference>
<dbReference type="GO" id="GO:0009555">
    <property type="term" value="P:pollen development"/>
    <property type="evidence" value="ECO:0000315"/>
    <property type="project" value="TAIR"/>
</dbReference>
<dbReference type="CDD" id="cd02081">
    <property type="entry name" value="P-type_ATPase_Ca_PMCA-like"/>
    <property type="match status" value="1"/>
</dbReference>
<dbReference type="FunFam" id="1.20.1110.10:FF:000039">
    <property type="entry name" value="Calcium-transporting ATPase"/>
    <property type="match status" value="1"/>
</dbReference>
<dbReference type="FunFam" id="1.20.5.170:FF:000026">
    <property type="entry name" value="Calcium-transporting ATPase"/>
    <property type="match status" value="1"/>
</dbReference>
<dbReference type="FunFam" id="2.70.150.10:FF:000006">
    <property type="entry name" value="Calcium-transporting ATPase"/>
    <property type="match status" value="1"/>
</dbReference>
<dbReference type="FunFam" id="3.40.1110.10:FF:000011">
    <property type="entry name" value="Calcium-transporting ATPase"/>
    <property type="match status" value="1"/>
</dbReference>
<dbReference type="FunFam" id="3.40.50.1000:FF:000011">
    <property type="entry name" value="Calcium-transporting ATPase"/>
    <property type="match status" value="1"/>
</dbReference>
<dbReference type="Gene3D" id="1.20.5.170">
    <property type="match status" value="1"/>
</dbReference>
<dbReference type="Gene3D" id="3.40.1110.10">
    <property type="entry name" value="Calcium-transporting ATPase, cytoplasmic domain N"/>
    <property type="match status" value="1"/>
</dbReference>
<dbReference type="Gene3D" id="2.70.150.10">
    <property type="entry name" value="Calcium-transporting ATPase, cytoplasmic transduction domain A"/>
    <property type="match status" value="1"/>
</dbReference>
<dbReference type="Gene3D" id="1.20.1110.10">
    <property type="entry name" value="Calcium-transporting ATPase, transmembrane domain"/>
    <property type="match status" value="1"/>
</dbReference>
<dbReference type="Gene3D" id="3.40.50.1000">
    <property type="entry name" value="HAD superfamily/HAD-like"/>
    <property type="match status" value="1"/>
</dbReference>
<dbReference type="InterPro" id="IPR006068">
    <property type="entry name" value="ATPase_P-typ_cation-transptr_C"/>
</dbReference>
<dbReference type="InterPro" id="IPR004014">
    <property type="entry name" value="ATPase_P-typ_cation-transptr_N"/>
</dbReference>
<dbReference type="InterPro" id="IPR023299">
    <property type="entry name" value="ATPase_P-typ_cyto_dom_N"/>
</dbReference>
<dbReference type="InterPro" id="IPR018303">
    <property type="entry name" value="ATPase_P-typ_P_site"/>
</dbReference>
<dbReference type="InterPro" id="IPR023298">
    <property type="entry name" value="ATPase_P-typ_TM_dom_sf"/>
</dbReference>
<dbReference type="InterPro" id="IPR008250">
    <property type="entry name" value="ATPase_P-typ_transduc_dom_A_sf"/>
</dbReference>
<dbReference type="InterPro" id="IPR024750">
    <property type="entry name" value="Ca_ATPase_N_dom"/>
</dbReference>
<dbReference type="InterPro" id="IPR036412">
    <property type="entry name" value="HAD-like_sf"/>
</dbReference>
<dbReference type="InterPro" id="IPR023214">
    <property type="entry name" value="HAD_sf"/>
</dbReference>
<dbReference type="InterPro" id="IPR006408">
    <property type="entry name" value="P-type_ATPase_IIB"/>
</dbReference>
<dbReference type="InterPro" id="IPR001757">
    <property type="entry name" value="P_typ_ATPase"/>
</dbReference>
<dbReference type="InterPro" id="IPR044492">
    <property type="entry name" value="P_typ_ATPase_HD_dom"/>
</dbReference>
<dbReference type="NCBIfam" id="TIGR01517">
    <property type="entry name" value="ATPase-IIB_Ca"/>
    <property type="match status" value="1"/>
</dbReference>
<dbReference type="NCBIfam" id="TIGR01494">
    <property type="entry name" value="ATPase_P-type"/>
    <property type="match status" value="2"/>
</dbReference>
<dbReference type="PANTHER" id="PTHR24093:SF444">
    <property type="entry name" value="CALCIUM-TRANSPORTING ATPASE 7, PLASMA MEMBRANE-TYPE-RELATED"/>
    <property type="match status" value="1"/>
</dbReference>
<dbReference type="PANTHER" id="PTHR24093">
    <property type="entry name" value="CATION TRANSPORTING ATPASE"/>
    <property type="match status" value="1"/>
</dbReference>
<dbReference type="Pfam" id="PF12515">
    <property type="entry name" value="CaATP_NAI"/>
    <property type="match status" value="1"/>
</dbReference>
<dbReference type="Pfam" id="PF13246">
    <property type="entry name" value="Cation_ATPase"/>
    <property type="match status" value="1"/>
</dbReference>
<dbReference type="Pfam" id="PF00689">
    <property type="entry name" value="Cation_ATPase_C"/>
    <property type="match status" value="1"/>
</dbReference>
<dbReference type="Pfam" id="PF00690">
    <property type="entry name" value="Cation_ATPase_N"/>
    <property type="match status" value="1"/>
</dbReference>
<dbReference type="Pfam" id="PF00122">
    <property type="entry name" value="E1-E2_ATPase"/>
    <property type="match status" value="1"/>
</dbReference>
<dbReference type="Pfam" id="PF00702">
    <property type="entry name" value="Hydrolase"/>
    <property type="match status" value="1"/>
</dbReference>
<dbReference type="PRINTS" id="PR00119">
    <property type="entry name" value="CATATPASE"/>
</dbReference>
<dbReference type="PRINTS" id="PR00120">
    <property type="entry name" value="HATPASE"/>
</dbReference>
<dbReference type="SFLD" id="SFLDS00003">
    <property type="entry name" value="Haloacid_Dehalogenase"/>
    <property type="match status" value="1"/>
</dbReference>
<dbReference type="SFLD" id="SFLDF00027">
    <property type="entry name" value="p-type_atpase"/>
    <property type="match status" value="1"/>
</dbReference>
<dbReference type="SUPFAM" id="SSF81653">
    <property type="entry name" value="Calcium ATPase, transduction domain A"/>
    <property type="match status" value="1"/>
</dbReference>
<dbReference type="SUPFAM" id="SSF81665">
    <property type="entry name" value="Calcium ATPase, transmembrane domain M"/>
    <property type="match status" value="1"/>
</dbReference>
<dbReference type="SUPFAM" id="SSF56784">
    <property type="entry name" value="HAD-like"/>
    <property type="match status" value="1"/>
</dbReference>
<dbReference type="SUPFAM" id="SSF81660">
    <property type="entry name" value="Metal cation-transporting ATPase, ATP-binding domain N"/>
    <property type="match status" value="1"/>
</dbReference>
<dbReference type="PROSITE" id="PS00154">
    <property type="entry name" value="ATPASE_E1_E2"/>
    <property type="match status" value="1"/>
</dbReference>
<accession>O64806</accession>